<name>RS13_PYRCJ</name>
<accession>A3MUT0</accession>
<dbReference type="EMBL" id="CP000561">
    <property type="protein sequence ID" value="ABO08397.1"/>
    <property type="molecule type" value="Genomic_DNA"/>
</dbReference>
<dbReference type="RefSeq" id="WP_011849655.1">
    <property type="nucleotide sequence ID" value="NC_009073.1"/>
</dbReference>
<dbReference type="PDB" id="9E71">
    <property type="method" value="EM"/>
    <property type="resolution" value="2.36 A"/>
    <property type="chains" value="BO=1-153"/>
</dbReference>
<dbReference type="PDB" id="9E7F">
    <property type="method" value="EM"/>
    <property type="resolution" value="2.53 A"/>
    <property type="chains" value="BO=1-153"/>
</dbReference>
<dbReference type="PDBsum" id="9E71"/>
<dbReference type="PDBsum" id="9E7F"/>
<dbReference type="EMDB" id="EMD-47628"/>
<dbReference type="EMDB" id="EMD-47668"/>
<dbReference type="SMR" id="A3MUT0"/>
<dbReference type="STRING" id="410359.Pcal_0972"/>
<dbReference type="GeneID" id="4908672"/>
<dbReference type="KEGG" id="pcl:Pcal_0972"/>
<dbReference type="eggNOG" id="arCOG01722">
    <property type="taxonomic scope" value="Archaea"/>
</dbReference>
<dbReference type="HOGENOM" id="CLU_103849_0_0_2"/>
<dbReference type="OrthoDB" id="372127at2157"/>
<dbReference type="Proteomes" id="UP000001431">
    <property type="component" value="Chromosome"/>
</dbReference>
<dbReference type="GO" id="GO:0005829">
    <property type="term" value="C:cytosol"/>
    <property type="evidence" value="ECO:0007669"/>
    <property type="project" value="TreeGrafter"/>
</dbReference>
<dbReference type="GO" id="GO:0015935">
    <property type="term" value="C:small ribosomal subunit"/>
    <property type="evidence" value="ECO:0007669"/>
    <property type="project" value="TreeGrafter"/>
</dbReference>
<dbReference type="GO" id="GO:0019843">
    <property type="term" value="F:rRNA binding"/>
    <property type="evidence" value="ECO:0007669"/>
    <property type="project" value="UniProtKB-UniRule"/>
</dbReference>
<dbReference type="GO" id="GO:0003735">
    <property type="term" value="F:structural constituent of ribosome"/>
    <property type="evidence" value="ECO:0007669"/>
    <property type="project" value="InterPro"/>
</dbReference>
<dbReference type="GO" id="GO:0006412">
    <property type="term" value="P:translation"/>
    <property type="evidence" value="ECO:0007669"/>
    <property type="project" value="UniProtKB-UniRule"/>
</dbReference>
<dbReference type="FunFam" id="1.10.8.50:FF:000001">
    <property type="entry name" value="30S ribosomal protein S13"/>
    <property type="match status" value="1"/>
</dbReference>
<dbReference type="Gene3D" id="1.10.8.50">
    <property type="match status" value="1"/>
</dbReference>
<dbReference type="Gene3D" id="4.10.910.10">
    <property type="entry name" value="30s ribosomal protein s13, domain 2"/>
    <property type="match status" value="1"/>
</dbReference>
<dbReference type="HAMAP" id="MF_01315">
    <property type="entry name" value="Ribosomal_uS13"/>
    <property type="match status" value="1"/>
</dbReference>
<dbReference type="InterPro" id="IPR027437">
    <property type="entry name" value="Rbsml_uS13_C"/>
</dbReference>
<dbReference type="InterPro" id="IPR001892">
    <property type="entry name" value="Ribosomal_uS13"/>
</dbReference>
<dbReference type="InterPro" id="IPR010979">
    <property type="entry name" value="Ribosomal_uS13-like_H2TH"/>
</dbReference>
<dbReference type="InterPro" id="IPR019977">
    <property type="entry name" value="Ribosomal_uS13_archaeal"/>
</dbReference>
<dbReference type="InterPro" id="IPR018269">
    <property type="entry name" value="Ribosomal_uS13_CS"/>
</dbReference>
<dbReference type="NCBIfam" id="NF003140">
    <property type="entry name" value="PRK04053.1"/>
    <property type="match status" value="1"/>
</dbReference>
<dbReference type="NCBIfam" id="TIGR03629">
    <property type="entry name" value="uS13_arch"/>
    <property type="match status" value="1"/>
</dbReference>
<dbReference type="PANTHER" id="PTHR10871">
    <property type="entry name" value="30S RIBOSOMAL PROTEIN S13/40S RIBOSOMAL PROTEIN S18"/>
    <property type="match status" value="1"/>
</dbReference>
<dbReference type="PANTHER" id="PTHR10871:SF3">
    <property type="entry name" value="SMALL RIBOSOMAL SUBUNIT PROTEIN US13"/>
    <property type="match status" value="1"/>
</dbReference>
<dbReference type="Pfam" id="PF00416">
    <property type="entry name" value="Ribosomal_S13"/>
    <property type="match status" value="1"/>
</dbReference>
<dbReference type="PIRSF" id="PIRSF002134">
    <property type="entry name" value="Ribosomal_S13"/>
    <property type="match status" value="1"/>
</dbReference>
<dbReference type="SUPFAM" id="SSF46946">
    <property type="entry name" value="S13-like H2TH domain"/>
    <property type="match status" value="1"/>
</dbReference>
<dbReference type="PROSITE" id="PS00646">
    <property type="entry name" value="RIBOSOMAL_S13_1"/>
    <property type="match status" value="1"/>
</dbReference>
<dbReference type="PROSITE" id="PS50159">
    <property type="entry name" value="RIBOSOMAL_S13_2"/>
    <property type="match status" value="1"/>
</dbReference>
<evidence type="ECO:0000255" key="1">
    <source>
        <dbReference type="HAMAP-Rule" id="MF_01315"/>
    </source>
</evidence>
<evidence type="ECO:0000305" key="2"/>
<sequence>MAQEIRAIVRIGDTDLDGNKTVAYALAKIRGIGIATAYAICRKLGIDPHATLGLLPEDQINKLDWAVRNLHELAPAWFLNRRKDPETGRDLHLIGSELVLAAKRDVDLMKKLKSWKGIRHSLGLKVRGQRTVTTGRFGATAGVTKKKAAPGGK</sequence>
<comment type="function">
    <text evidence="1">Located at the top of the head of the 30S subunit, it contacts several helices of the 16S rRNA. In the 70S ribosome it contacts the 23S rRNA (bridge B1a) and protein L5 of the 50S subunit (bridge B1b), connecting the 2 subunits; these bridges are implicated in subunit movement.</text>
</comment>
<comment type="subunit">
    <text evidence="1">Part of the 30S ribosomal subunit. Forms a loose heterodimer with protein S19. Forms two bridges to the 50S subunit in the 70S ribosome.</text>
</comment>
<comment type="similarity">
    <text evidence="1">Belongs to the universal ribosomal protein uS13 family.</text>
</comment>
<reference key="1">
    <citation type="submission" date="2007-02" db="EMBL/GenBank/DDBJ databases">
        <title>Complete sequence of Pyrobaculum calidifontis JCM 11548.</title>
        <authorList>
            <consortium name="US DOE Joint Genome Institute"/>
            <person name="Copeland A."/>
            <person name="Lucas S."/>
            <person name="Lapidus A."/>
            <person name="Barry K."/>
            <person name="Glavina del Rio T."/>
            <person name="Dalin E."/>
            <person name="Tice H."/>
            <person name="Pitluck S."/>
            <person name="Chain P."/>
            <person name="Malfatti S."/>
            <person name="Shin M."/>
            <person name="Vergez L."/>
            <person name="Schmutz J."/>
            <person name="Larimer F."/>
            <person name="Land M."/>
            <person name="Hauser L."/>
            <person name="Kyrpides N."/>
            <person name="Mikhailova N."/>
            <person name="Cozen A.E."/>
            <person name="Fitz-Gibbon S.T."/>
            <person name="House C.H."/>
            <person name="Saltikov C."/>
            <person name="Lowe T.M."/>
            <person name="Richardson P."/>
        </authorList>
    </citation>
    <scope>NUCLEOTIDE SEQUENCE [LARGE SCALE GENOMIC DNA]</scope>
    <source>
        <strain>DSM 21063 / JCM 11548 / VA1</strain>
    </source>
</reference>
<keyword id="KW-0002">3D-structure</keyword>
<keyword id="KW-0687">Ribonucleoprotein</keyword>
<keyword id="KW-0689">Ribosomal protein</keyword>
<keyword id="KW-0694">RNA-binding</keyword>
<keyword id="KW-0699">rRNA-binding</keyword>
<feature type="chain" id="PRO_0000306764" description="Small ribosomal subunit protein uS13">
    <location>
        <begin position="1"/>
        <end position="153"/>
    </location>
</feature>
<organism>
    <name type="scientific">Pyrobaculum calidifontis (strain DSM 21063 / JCM 11548 / VA1)</name>
    <dbReference type="NCBI Taxonomy" id="410359"/>
    <lineage>
        <taxon>Archaea</taxon>
        <taxon>Thermoproteota</taxon>
        <taxon>Thermoprotei</taxon>
        <taxon>Thermoproteales</taxon>
        <taxon>Thermoproteaceae</taxon>
        <taxon>Pyrobaculum</taxon>
    </lineage>
</organism>
<proteinExistence type="evidence at protein level"/>
<gene>
    <name evidence="1" type="primary">rps13</name>
    <name type="ordered locus">Pcal_0972</name>
</gene>
<protein>
    <recommendedName>
        <fullName evidence="1">Small ribosomal subunit protein uS13</fullName>
    </recommendedName>
    <alternativeName>
        <fullName evidence="2">30S ribosomal protein S13</fullName>
    </alternativeName>
</protein>